<accession>B1IN59</accession>
<name>Y2660_CLOBK</name>
<gene>
    <name type="ordered locus">CLD_2660</name>
</gene>
<protein>
    <recommendedName>
        <fullName evidence="1">UPF0597 protein CLD_2660</fullName>
    </recommendedName>
</protein>
<organism>
    <name type="scientific">Clostridium botulinum (strain Okra / Type B1)</name>
    <dbReference type="NCBI Taxonomy" id="498213"/>
    <lineage>
        <taxon>Bacteria</taxon>
        <taxon>Bacillati</taxon>
        <taxon>Bacillota</taxon>
        <taxon>Clostridia</taxon>
        <taxon>Eubacteriales</taxon>
        <taxon>Clostridiaceae</taxon>
        <taxon>Clostridium</taxon>
    </lineage>
</organism>
<dbReference type="EMBL" id="CP000939">
    <property type="protein sequence ID" value="ACA45403.1"/>
    <property type="molecule type" value="Genomic_DNA"/>
</dbReference>
<dbReference type="RefSeq" id="WP_012099987.1">
    <property type="nucleotide sequence ID" value="NC_010516.1"/>
</dbReference>
<dbReference type="KEGG" id="cbb:CLD_2660"/>
<dbReference type="HOGENOM" id="CLU_051840_0_0_9"/>
<dbReference type="Proteomes" id="UP000008541">
    <property type="component" value="Chromosome"/>
</dbReference>
<dbReference type="GO" id="GO:0080146">
    <property type="term" value="F:L-cysteine desulfhydrase activity"/>
    <property type="evidence" value="ECO:0007669"/>
    <property type="project" value="TreeGrafter"/>
</dbReference>
<dbReference type="GO" id="GO:0019450">
    <property type="term" value="P:L-cysteine catabolic process to pyruvate"/>
    <property type="evidence" value="ECO:0007669"/>
    <property type="project" value="TreeGrafter"/>
</dbReference>
<dbReference type="HAMAP" id="MF_01845">
    <property type="entry name" value="UPF0597"/>
    <property type="match status" value="1"/>
</dbReference>
<dbReference type="InterPro" id="IPR005130">
    <property type="entry name" value="Ser_deHydtase-like_asu"/>
</dbReference>
<dbReference type="InterPro" id="IPR021144">
    <property type="entry name" value="UPF0597"/>
</dbReference>
<dbReference type="PANTHER" id="PTHR30501">
    <property type="entry name" value="UPF0597 PROTEIN YHAM"/>
    <property type="match status" value="1"/>
</dbReference>
<dbReference type="PANTHER" id="PTHR30501:SF2">
    <property type="entry name" value="UPF0597 PROTEIN YHAM"/>
    <property type="match status" value="1"/>
</dbReference>
<dbReference type="Pfam" id="PF03313">
    <property type="entry name" value="SDH_alpha"/>
    <property type="match status" value="1"/>
</dbReference>
<dbReference type="PIRSF" id="PIRSF006054">
    <property type="entry name" value="UCP006054"/>
    <property type="match status" value="1"/>
</dbReference>
<reference key="1">
    <citation type="journal article" date="2007" name="PLoS ONE">
        <title>Analysis of the neurotoxin complex genes in Clostridium botulinum A1-A4 and B1 strains: BoNT/A3, /Ba4 and /B1 clusters are located within plasmids.</title>
        <authorList>
            <person name="Smith T.J."/>
            <person name="Hill K.K."/>
            <person name="Foley B.T."/>
            <person name="Detter J.C."/>
            <person name="Munk A.C."/>
            <person name="Bruce D.C."/>
            <person name="Doggett N.A."/>
            <person name="Smith L.A."/>
            <person name="Marks J.D."/>
            <person name="Xie G."/>
            <person name="Brettin T.S."/>
        </authorList>
    </citation>
    <scope>NUCLEOTIDE SEQUENCE [LARGE SCALE GENOMIC DNA]</scope>
    <source>
        <strain>Okra / Type B1</strain>
    </source>
</reference>
<proteinExistence type="inferred from homology"/>
<evidence type="ECO:0000255" key="1">
    <source>
        <dbReference type="HAMAP-Rule" id="MF_01845"/>
    </source>
</evidence>
<comment type="similarity">
    <text evidence="1">Belongs to the UPF0597 family.</text>
</comment>
<sequence>MLTKENLLTLLKQEVVPALGCTEPVCVALATADAYHAIGGRIVSIKIEVNPGIYKNGMSVGIPGFDRVGLKYAASLGAVIGNPEKKLELLEDITAEVSQKAIKIVENSQVVVVIKHEEAQLYVRAEIITTAGMGISEIRGTHSNIIFTKRNNDMLLQKEYSADSDDSLHQQLKLMGIAEIRKLIDECKEEELSFLLDGVDMNERLADYGLEHSLGIGIASALQEKMTTDIMGDNLFSRTMLRVASSAEGRMSGCPYAVMSSAGSGNHGITAILPVTEMARYLNSSREQLVKALAFSHTLNVYIKLFTGKLSATCGCGVSAATAASAAMVWLMGGNDHQIANAIINMSGNLTGMICDGGKIGCALKLATATNAALMCAYLAMSDVALQPSDGICDVTAEQVIRNMGQVSNPGMVETDQTILSIMIEKDQRK</sequence>
<feature type="chain" id="PRO_0000339803" description="UPF0597 protein CLD_2660">
    <location>
        <begin position="1"/>
        <end position="430"/>
    </location>
</feature>